<keyword id="KW-0378">Hydrolase</keyword>
<keyword id="KW-0460">Magnesium</keyword>
<keyword id="KW-0511">Multifunctional enzyme</keyword>
<keyword id="KW-0548">Nucleotidyltransferase</keyword>
<keyword id="KW-0677">Repeat</keyword>
<keyword id="KW-0808">Transferase</keyword>
<feature type="chain" id="PRO_1000119366" description="Bifunctional uridylyltransferase/uridylyl-removing enzyme">
    <location>
        <begin position="1"/>
        <end position="890"/>
    </location>
</feature>
<feature type="domain" description="HD" evidence="2">
    <location>
        <begin position="468"/>
        <end position="590"/>
    </location>
</feature>
<feature type="domain" description="ACT 1" evidence="1">
    <location>
        <begin position="709"/>
        <end position="789"/>
    </location>
</feature>
<feature type="domain" description="ACT 2" evidence="1">
    <location>
        <begin position="816"/>
        <end position="890"/>
    </location>
</feature>
<feature type="region of interest" description="Uridylyltransferase">
    <location>
        <begin position="1"/>
        <end position="349"/>
    </location>
</feature>
<feature type="region of interest" description="Uridylyl-removing">
    <location>
        <begin position="350"/>
        <end position="708"/>
    </location>
</feature>
<comment type="function">
    <text evidence="1">Modifies, by uridylylation and deuridylylation, the PII regulatory proteins (GlnB and homologs), in response to the nitrogen status of the cell that GlnD senses through the glutamine level. Under low glutamine levels, catalyzes the conversion of the PII proteins and UTP to PII-UMP and PPi, while under higher glutamine levels, GlnD hydrolyzes PII-UMP to PII and UMP (deuridylylation). Thus, controls uridylylation state and activity of the PII proteins, and plays an important role in the regulation of nitrogen assimilation and metabolism.</text>
</comment>
<comment type="catalytic activity">
    <reaction evidence="1">
        <text>[protein-PII]-L-tyrosine + UTP = [protein-PII]-uridylyl-L-tyrosine + diphosphate</text>
        <dbReference type="Rhea" id="RHEA:13673"/>
        <dbReference type="Rhea" id="RHEA-COMP:12147"/>
        <dbReference type="Rhea" id="RHEA-COMP:12148"/>
        <dbReference type="ChEBI" id="CHEBI:33019"/>
        <dbReference type="ChEBI" id="CHEBI:46398"/>
        <dbReference type="ChEBI" id="CHEBI:46858"/>
        <dbReference type="ChEBI" id="CHEBI:90602"/>
        <dbReference type="EC" id="2.7.7.59"/>
    </reaction>
</comment>
<comment type="catalytic activity">
    <reaction evidence="1">
        <text>[protein-PII]-uridylyl-L-tyrosine + H2O = [protein-PII]-L-tyrosine + UMP + H(+)</text>
        <dbReference type="Rhea" id="RHEA:48600"/>
        <dbReference type="Rhea" id="RHEA-COMP:12147"/>
        <dbReference type="Rhea" id="RHEA-COMP:12148"/>
        <dbReference type="ChEBI" id="CHEBI:15377"/>
        <dbReference type="ChEBI" id="CHEBI:15378"/>
        <dbReference type="ChEBI" id="CHEBI:46858"/>
        <dbReference type="ChEBI" id="CHEBI:57865"/>
        <dbReference type="ChEBI" id="CHEBI:90602"/>
    </reaction>
</comment>
<comment type="cofactor">
    <cofactor evidence="1">
        <name>Mg(2+)</name>
        <dbReference type="ChEBI" id="CHEBI:18420"/>
    </cofactor>
</comment>
<comment type="activity regulation">
    <text evidence="1">Uridylyltransferase (UTase) activity is inhibited by glutamine, while glutamine activates uridylyl-removing (UR) activity.</text>
</comment>
<comment type="domain">
    <text evidence="1">Has four distinct domains: an N-terminal nucleotidyltransferase (NT) domain responsible for UTase activity, a central HD domain that encodes UR activity, and two C-terminal ACT domains that seem to have a role in glutamine sensing.</text>
</comment>
<comment type="similarity">
    <text evidence="1">Belongs to the GlnD family.</text>
</comment>
<protein>
    <recommendedName>
        <fullName evidence="1">Bifunctional uridylyltransferase/uridylyl-removing enzyme</fullName>
        <shortName evidence="1">UTase/UR</shortName>
    </recommendedName>
    <alternativeName>
        <fullName evidence="1">Bifunctional [protein-PII] modification enzyme</fullName>
    </alternativeName>
    <alternativeName>
        <fullName evidence="1">Bifunctional nitrogen sensor protein</fullName>
    </alternativeName>
    <domain>
        <recommendedName>
            <fullName evidence="1">[Protein-PII] uridylyltransferase</fullName>
            <shortName evidence="1">PII uridylyltransferase</shortName>
            <shortName evidence="1">UTase</shortName>
            <ecNumber evidence="1">2.7.7.59</ecNumber>
        </recommendedName>
    </domain>
    <domain>
        <recommendedName>
            <fullName evidence="1">[Protein-PII]-UMP uridylyl-removing enzyme</fullName>
            <shortName evidence="1">UR</shortName>
            <ecNumber evidence="1">3.1.4.-</ecNumber>
        </recommendedName>
    </domain>
</protein>
<proteinExistence type="inferred from homology"/>
<dbReference type="EC" id="2.7.7.59" evidence="1"/>
<dbReference type="EC" id="3.1.4.-" evidence="1"/>
<dbReference type="EMBL" id="CP000970">
    <property type="protein sequence ID" value="ACB19520.1"/>
    <property type="molecule type" value="Genomic_DNA"/>
</dbReference>
<dbReference type="RefSeq" id="WP_001094562.1">
    <property type="nucleotide sequence ID" value="NC_010498.1"/>
</dbReference>
<dbReference type="SMR" id="B1LGW8"/>
<dbReference type="KEGG" id="ecm:EcSMS35_0177"/>
<dbReference type="HOGENOM" id="CLU_012833_0_0_6"/>
<dbReference type="Proteomes" id="UP000007011">
    <property type="component" value="Chromosome"/>
</dbReference>
<dbReference type="GO" id="GO:0008773">
    <property type="term" value="F:[protein-PII] uridylyltransferase activity"/>
    <property type="evidence" value="ECO:0007669"/>
    <property type="project" value="UniProtKB-UniRule"/>
</dbReference>
<dbReference type="GO" id="GO:0008081">
    <property type="term" value="F:phosphoric diester hydrolase activity"/>
    <property type="evidence" value="ECO:0007669"/>
    <property type="project" value="UniProtKB-UniRule"/>
</dbReference>
<dbReference type="GO" id="GO:0006808">
    <property type="term" value="P:regulation of nitrogen utilization"/>
    <property type="evidence" value="ECO:0007669"/>
    <property type="project" value="UniProtKB-UniRule"/>
</dbReference>
<dbReference type="CDD" id="cd04899">
    <property type="entry name" value="ACT_ACR-UUR-like_2"/>
    <property type="match status" value="1"/>
</dbReference>
<dbReference type="CDD" id="cd04900">
    <property type="entry name" value="ACT_UUR-like_1"/>
    <property type="match status" value="1"/>
</dbReference>
<dbReference type="CDD" id="cd00077">
    <property type="entry name" value="HDc"/>
    <property type="match status" value="1"/>
</dbReference>
<dbReference type="CDD" id="cd05401">
    <property type="entry name" value="NT_GlnE_GlnD_like"/>
    <property type="match status" value="1"/>
</dbReference>
<dbReference type="FunFam" id="1.10.3210.10:FF:000005">
    <property type="entry name" value="Bifunctional uridylyltransferase/uridylyl-removing enzyme"/>
    <property type="match status" value="1"/>
</dbReference>
<dbReference type="Gene3D" id="1.10.3210.10">
    <property type="entry name" value="Hypothetical protein af1432"/>
    <property type="match status" value="1"/>
</dbReference>
<dbReference type="HAMAP" id="MF_00277">
    <property type="entry name" value="PII_uridylyl_transf"/>
    <property type="match status" value="1"/>
</dbReference>
<dbReference type="InterPro" id="IPR045865">
    <property type="entry name" value="ACT-like_dom_sf"/>
</dbReference>
<dbReference type="InterPro" id="IPR002912">
    <property type="entry name" value="ACT_dom"/>
</dbReference>
<dbReference type="InterPro" id="IPR003607">
    <property type="entry name" value="HD/PDEase_dom"/>
</dbReference>
<dbReference type="InterPro" id="IPR006674">
    <property type="entry name" value="HD_domain"/>
</dbReference>
<dbReference type="InterPro" id="IPR043519">
    <property type="entry name" value="NT_sf"/>
</dbReference>
<dbReference type="InterPro" id="IPR013546">
    <property type="entry name" value="PII_UdlTrfase/GS_AdlTrfase"/>
</dbReference>
<dbReference type="InterPro" id="IPR002934">
    <property type="entry name" value="Polymerase_NTP_transf_dom"/>
</dbReference>
<dbReference type="InterPro" id="IPR010043">
    <property type="entry name" value="UTase/UR"/>
</dbReference>
<dbReference type="NCBIfam" id="NF002487">
    <property type="entry name" value="PRK01759.1"/>
    <property type="match status" value="1"/>
</dbReference>
<dbReference type="NCBIfam" id="NF003448">
    <property type="entry name" value="PRK05007.1"/>
    <property type="match status" value="1"/>
</dbReference>
<dbReference type="NCBIfam" id="TIGR01693">
    <property type="entry name" value="UTase_glnD"/>
    <property type="match status" value="1"/>
</dbReference>
<dbReference type="PANTHER" id="PTHR47320">
    <property type="entry name" value="BIFUNCTIONAL URIDYLYLTRANSFERASE/URIDYLYL-REMOVING ENZYME"/>
    <property type="match status" value="1"/>
</dbReference>
<dbReference type="PANTHER" id="PTHR47320:SF1">
    <property type="entry name" value="BIFUNCTIONAL URIDYLYLTRANSFERASE_URIDYLYL-REMOVING ENZYME"/>
    <property type="match status" value="1"/>
</dbReference>
<dbReference type="Pfam" id="PF01842">
    <property type="entry name" value="ACT"/>
    <property type="match status" value="2"/>
</dbReference>
<dbReference type="Pfam" id="PF08335">
    <property type="entry name" value="GlnD_UR_UTase"/>
    <property type="match status" value="1"/>
</dbReference>
<dbReference type="Pfam" id="PF01966">
    <property type="entry name" value="HD"/>
    <property type="match status" value="1"/>
</dbReference>
<dbReference type="Pfam" id="PF01909">
    <property type="entry name" value="NTP_transf_2"/>
    <property type="match status" value="1"/>
</dbReference>
<dbReference type="PIRSF" id="PIRSF006288">
    <property type="entry name" value="PII_uridyltransf"/>
    <property type="match status" value="1"/>
</dbReference>
<dbReference type="SMART" id="SM00471">
    <property type="entry name" value="HDc"/>
    <property type="match status" value="1"/>
</dbReference>
<dbReference type="SUPFAM" id="SSF55021">
    <property type="entry name" value="ACT-like"/>
    <property type="match status" value="2"/>
</dbReference>
<dbReference type="SUPFAM" id="SSF109604">
    <property type="entry name" value="HD-domain/PDEase-like"/>
    <property type="match status" value="1"/>
</dbReference>
<dbReference type="SUPFAM" id="SSF81301">
    <property type="entry name" value="Nucleotidyltransferase"/>
    <property type="match status" value="1"/>
</dbReference>
<dbReference type="SUPFAM" id="SSF81593">
    <property type="entry name" value="Nucleotidyltransferase substrate binding subunit/domain"/>
    <property type="match status" value="1"/>
</dbReference>
<dbReference type="PROSITE" id="PS51671">
    <property type="entry name" value="ACT"/>
    <property type="match status" value="2"/>
</dbReference>
<dbReference type="PROSITE" id="PS51831">
    <property type="entry name" value="HD"/>
    <property type="match status" value="1"/>
</dbReference>
<organism>
    <name type="scientific">Escherichia coli (strain SMS-3-5 / SECEC)</name>
    <dbReference type="NCBI Taxonomy" id="439855"/>
    <lineage>
        <taxon>Bacteria</taxon>
        <taxon>Pseudomonadati</taxon>
        <taxon>Pseudomonadota</taxon>
        <taxon>Gammaproteobacteria</taxon>
        <taxon>Enterobacterales</taxon>
        <taxon>Enterobacteriaceae</taxon>
        <taxon>Escherichia</taxon>
    </lineage>
</organism>
<sequence length="890" mass="102373">MNTLPEQYANTALPTLPGQPQNPCGWPRDELTVCGIKAHIDTFQRWLGDAFDNGISAEELVEARTEFIDQLLQRLWIDAGFSQIADLALVAVGGYGRGELHPLSDIDLLILSRKKLPDDQAQKVGELLTLLWDVKLEVGHSVRTLEECMLEGLSDLTVATNLIESRLLIGDVALFLELQKHIFSEGFWPSDKFYAAKVEEQNQRHQRYHGTSYNLEPDIKSSPGGLRDIHTLQWVARRHFGATSLDEMVGFGFLTSAERAELNECLHILWRIRFALHLVVSRYDNRLLFDRQLSVAQRLNYSGEGNEPVERMMKDYFRVTRRVSELNQMLLQLFDEAILALPADEKPRPIDDEFQLRGTLIDLRDETLFMRQPEAILRMFYTMVRNSAITGIYSTTLRQLRHARRHLQQPLCNIPEARKLFLSILRHPGAVRRGLLPMHRHSVLGAYMPQWSHIVGQMQFDLFHAYTVDEHTIRVMLKLESFASEETRQRHPLCVDVWPRLPSTELIFIAALFHDIAKGRGGDHSILGAQDVVHFAELHGLNSRETQLVAWLVRQHLLMSVTAQRRDIQDPEVIKQFAEEVQTENRLRYLVCLTVADICATNETLWNSWKQSLLRELYFATEKQLRRGMQNTPDMRERVRHHQLQALALLRMDNIDEEALHQIWSRCRANYFVRHSPNQLAWHARHLLQHDLSKPLVLLSPQATRGGTEIFIWSPDRPYLFAAVCAELDRRNLSVHDAQIFTTRDGMAMDTFIVLEPDGSPLSADRHEVIRFGLEQVLTQSSWQPPQPRRQPAKLRHFTVETEVTFLPTHTDRKSFLELIALDQPGLLARVGKIFADLGISLHGARITTIGERVEDLFIIATADRRALNNELQQEVHQRLTEALNPNDKG</sequence>
<gene>
    <name evidence="1" type="primary">glnD</name>
    <name type="ordered locus">EcSMS35_0177</name>
</gene>
<accession>B1LGW8</accession>
<evidence type="ECO:0000255" key="1">
    <source>
        <dbReference type="HAMAP-Rule" id="MF_00277"/>
    </source>
</evidence>
<evidence type="ECO:0000255" key="2">
    <source>
        <dbReference type="PROSITE-ProRule" id="PRU01175"/>
    </source>
</evidence>
<reference key="1">
    <citation type="journal article" date="2008" name="J. Bacteriol.">
        <title>Insights into the environmental resistance gene pool from the genome sequence of the multidrug-resistant environmental isolate Escherichia coli SMS-3-5.</title>
        <authorList>
            <person name="Fricke W.F."/>
            <person name="Wright M.S."/>
            <person name="Lindell A.H."/>
            <person name="Harkins D.M."/>
            <person name="Baker-Austin C."/>
            <person name="Ravel J."/>
            <person name="Stepanauskas R."/>
        </authorList>
    </citation>
    <scope>NUCLEOTIDE SEQUENCE [LARGE SCALE GENOMIC DNA]</scope>
    <source>
        <strain>SMS-3-5 / SECEC</strain>
    </source>
</reference>
<name>GLND_ECOSM</name>